<feature type="chain" id="PRO_1000146339" description="ATP synthase epsilon chain">
    <location>
        <begin position="1"/>
        <end position="121"/>
    </location>
</feature>
<evidence type="ECO:0000255" key="1">
    <source>
        <dbReference type="HAMAP-Rule" id="MF_00530"/>
    </source>
</evidence>
<comment type="function">
    <text evidence="1">Produces ATP from ADP in the presence of a proton gradient across the membrane.</text>
</comment>
<comment type="subunit">
    <text evidence="1">F-type ATPases have 2 components, CF(1) - the catalytic core - and CF(0) - the membrane proton channel. CF(1) has five subunits: alpha(3), beta(3), gamma(1), delta(1), epsilon(1). CF(0) has three main subunits: a, b and c.</text>
</comment>
<comment type="subcellular location">
    <subcellularLocation>
        <location evidence="1">Cell membrane</location>
        <topology evidence="1">Peripheral membrane protein</topology>
    </subcellularLocation>
</comment>
<comment type="similarity">
    <text evidence="1">Belongs to the ATPase epsilon chain family.</text>
</comment>
<name>ATPE_MYCLB</name>
<gene>
    <name evidence="1" type="primary">atpC</name>
    <name type="ordered locus">MLBr01146</name>
</gene>
<accession>B8ZR43</accession>
<protein>
    <recommendedName>
        <fullName evidence="1">ATP synthase epsilon chain</fullName>
    </recommendedName>
    <alternativeName>
        <fullName evidence="1">ATP synthase F1 sector epsilon subunit</fullName>
    </alternativeName>
    <alternativeName>
        <fullName evidence="1">F-ATPase epsilon subunit</fullName>
    </alternativeName>
</protein>
<proteinExistence type="inferred from homology"/>
<keyword id="KW-0066">ATP synthesis</keyword>
<keyword id="KW-1003">Cell membrane</keyword>
<keyword id="KW-0139">CF(1)</keyword>
<keyword id="KW-0375">Hydrogen ion transport</keyword>
<keyword id="KW-0406">Ion transport</keyword>
<keyword id="KW-0472">Membrane</keyword>
<keyword id="KW-0813">Transport</keyword>
<dbReference type="EMBL" id="FM211192">
    <property type="protein sequence ID" value="CAR71241.1"/>
    <property type="molecule type" value="Genomic_DNA"/>
</dbReference>
<dbReference type="BMRB" id="B8ZR43"/>
<dbReference type="SMR" id="B8ZR43"/>
<dbReference type="KEGG" id="mlb:MLBr01146"/>
<dbReference type="HOGENOM" id="CLU_084338_4_0_11"/>
<dbReference type="Proteomes" id="UP000006900">
    <property type="component" value="Chromosome"/>
</dbReference>
<dbReference type="GO" id="GO:0005886">
    <property type="term" value="C:plasma membrane"/>
    <property type="evidence" value="ECO:0007669"/>
    <property type="project" value="UniProtKB-SubCell"/>
</dbReference>
<dbReference type="GO" id="GO:0045259">
    <property type="term" value="C:proton-transporting ATP synthase complex"/>
    <property type="evidence" value="ECO:0007669"/>
    <property type="project" value="UniProtKB-KW"/>
</dbReference>
<dbReference type="GO" id="GO:0005524">
    <property type="term" value="F:ATP binding"/>
    <property type="evidence" value="ECO:0007669"/>
    <property type="project" value="UniProtKB-UniRule"/>
</dbReference>
<dbReference type="GO" id="GO:0046933">
    <property type="term" value="F:proton-transporting ATP synthase activity, rotational mechanism"/>
    <property type="evidence" value="ECO:0007669"/>
    <property type="project" value="UniProtKB-UniRule"/>
</dbReference>
<dbReference type="CDD" id="cd12152">
    <property type="entry name" value="F1-ATPase_delta"/>
    <property type="match status" value="1"/>
</dbReference>
<dbReference type="Gene3D" id="2.60.15.10">
    <property type="entry name" value="F0F1 ATP synthase delta/epsilon subunit, N-terminal"/>
    <property type="match status" value="1"/>
</dbReference>
<dbReference type="HAMAP" id="MF_00530">
    <property type="entry name" value="ATP_synth_epsil_bac"/>
    <property type="match status" value="1"/>
</dbReference>
<dbReference type="InterPro" id="IPR001469">
    <property type="entry name" value="ATP_synth_F1_dsu/esu"/>
</dbReference>
<dbReference type="InterPro" id="IPR020546">
    <property type="entry name" value="ATP_synth_F1_dsu/esu_N"/>
</dbReference>
<dbReference type="InterPro" id="IPR036771">
    <property type="entry name" value="ATPsynth_dsu/esu_N"/>
</dbReference>
<dbReference type="NCBIfam" id="TIGR01216">
    <property type="entry name" value="ATP_synt_epsi"/>
    <property type="match status" value="1"/>
</dbReference>
<dbReference type="NCBIfam" id="NF009977">
    <property type="entry name" value="PRK13442.1"/>
    <property type="match status" value="1"/>
</dbReference>
<dbReference type="PANTHER" id="PTHR13822">
    <property type="entry name" value="ATP SYNTHASE DELTA/EPSILON CHAIN"/>
    <property type="match status" value="1"/>
</dbReference>
<dbReference type="PANTHER" id="PTHR13822:SF10">
    <property type="entry name" value="ATP SYNTHASE EPSILON CHAIN, CHLOROPLASTIC"/>
    <property type="match status" value="1"/>
</dbReference>
<dbReference type="Pfam" id="PF02823">
    <property type="entry name" value="ATP-synt_DE_N"/>
    <property type="match status" value="1"/>
</dbReference>
<dbReference type="SUPFAM" id="SSF51344">
    <property type="entry name" value="Epsilon subunit of F1F0-ATP synthase N-terminal domain"/>
    <property type="match status" value="1"/>
</dbReference>
<sequence length="121" mass="13338">MDELNIEIVAVDRKIWSGKGTFLFTRTTAGEIGILPRHIPMVAQLVDDNMVRIEREGEKDLRVAVDGGFLSVTEERVSILAESAEFDSEIDENAAKQDAESDDPRIAARGRARLRAVGAID</sequence>
<reference key="1">
    <citation type="journal article" date="2009" name="Nat. Genet.">
        <title>Comparative genomic and phylogeographic analysis of Mycobacterium leprae.</title>
        <authorList>
            <person name="Monot M."/>
            <person name="Honore N."/>
            <person name="Garnier T."/>
            <person name="Zidane N."/>
            <person name="Sherafi D."/>
            <person name="Paniz-Mondolfi A."/>
            <person name="Matsuoka M."/>
            <person name="Taylor G.M."/>
            <person name="Donoghue H.D."/>
            <person name="Bouwman A."/>
            <person name="Mays S."/>
            <person name="Watson C."/>
            <person name="Lockwood D."/>
            <person name="Khamispour A."/>
            <person name="Dowlati Y."/>
            <person name="Jianping S."/>
            <person name="Rea T.H."/>
            <person name="Vera-Cabrera L."/>
            <person name="Stefani M.M."/>
            <person name="Banu S."/>
            <person name="Macdonald M."/>
            <person name="Sapkota B.R."/>
            <person name="Spencer J.S."/>
            <person name="Thomas J."/>
            <person name="Harshman K."/>
            <person name="Singh P."/>
            <person name="Busso P."/>
            <person name="Gattiker A."/>
            <person name="Rougemont J."/>
            <person name="Brennan P.J."/>
            <person name="Cole S.T."/>
        </authorList>
    </citation>
    <scope>NUCLEOTIDE SEQUENCE [LARGE SCALE GENOMIC DNA]</scope>
    <source>
        <strain>Br4923</strain>
    </source>
</reference>
<organism>
    <name type="scientific">Mycobacterium leprae (strain Br4923)</name>
    <dbReference type="NCBI Taxonomy" id="561304"/>
    <lineage>
        <taxon>Bacteria</taxon>
        <taxon>Bacillati</taxon>
        <taxon>Actinomycetota</taxon>
        <taxon>Actinomycetes</taxon>
        <taxon>Mycobacteriales</taxon>
        <taxon>Mycobacteriaceae</taxon>
        <taxon>Mycobacterium</taxon>
    </lineage>
</organism>